<gene>
    <name evidence="2" type="primary">rpsL</name>
    <name type="ordered locus">Sama_0208</name>
</gene>
<keyword id="KW-0488">Methylation</keyword>
<keyword id="KW-1185">Reference proteome</keyword>
<keyword id="KW-0687">Ribonucleoprotein</keyword>
<keyword id="KW-0689">Ribosomal protein</keyword>
<keyword id="KW-0694">RNA-binding</keyword>
<keyword id="KW-0699">rRNA-binding</keyword>
<keyword id="KW-0820">tRNA-binding</keyword>
<comment type="function">
    <text evidence="2">With S4 and S5 plays an important role in translational accuracy.</text>
</comment>
<comment type="function">
    <text evidence="2">Interacts with and stabilizes bases of the 16S rRNA that are involved in tRNA selection in the A site and with the mRNA backbone. Located at the interface of the 30S and 50S subunits, it traverses the body of the 30S subunit contacting proteins on the other side and probably holding the rRNA structure together. The combined cluster of proteins S8, S12 and S17 appears to hold together the shoulder and platform of the 30S subunit.</text>
</comment>
<comment type="subunit">
    <text evidence="2">Part of the 30S ribosomal subunit. Contacts proteins S8 and S17. May interact with IF1 in the 30S initiation complex.</text>
</comment>
<comment type="similarity">
    <text evidence="2">Belongs to the universal ribosomal protein uS12 family.</text>
</comment>
<reference key="1">
    <citation type="submission" date="2006-12" db="EMBL/GenBank/DDBJ databases">
        <title>Complete sequence of Shewanella amazonensis SB2B.</title>
        <authorList>
            <consortium name="US DOE Joint Genome Institute"/>
            <person name="Copeland A."/>
            <person name="Lucas S."/>
            <person name="Lapidus A."/>
            <person name="Barry K."/>
            <person name="Detter J.C."/>
            <person name="Glavina del Rio T."/>
            <person name="Hammon N."/>
            <person name="Israni S."/>
            <person name="Dalin E."/>
            <person name="Tice H."/>
            <person name="Pitluck S."/>
            <person name="Munk A.C."/>
            <person name="Brettin T."/>
            <person name="Bruce D."/>
            <person name="Han C."/>
            <person name="Tapia R."/>
            <person name="Gilna P."/>
            <person name="Schmutz J."/>
            <person name="Larimer F."/>
            <person name="Land M."/>
            <person name="Hauser L."/>
            <person name="Kyrpides N."/>
            <person name="Mikhailova N."/>
            <person name="Fredrickson J."/>
            <person name="Richardson P."/>
        </authorList>
    </citation>
    <scope>NUCLEOTIDE SEQUENCE [LARGE SCALE GENOMIC DNA]</scope>
    <source>
        <strain>ATCC BAA-1098 / SB2B</strain>
    </source>
</reference>
<name>RS12_SHEAM</name>
<accession>A1S213</accession>
<feature type="chain" id="PRO_0000296027" description="Small ribosomal subunit protein uS12">
    <location>
        <begin position="1"/>
        <end position="124"/>
    </location>
</feature>
<feature type="modified residue" description="3-methylthioaspartic acid" evidence="1">
    <location>
        <position position="89"/>
    </location>
</feature>
<evidence type="ECO:0000250" key="1"/>
<evidence type="ECO:0000255" key="2">
    <source>
        <dbReference type="HAMAP-Rule" id="MF_00403"/>
    </source>
</evidence>
<evidence type="ECO:0000305" key="3"/>
<dbReference type="EMBL" id="CP000507">
    <property type="protein sequence ID" value="ABL98419.1"/>
    <property type="molecule type" value="Genomic_DNA"/>
</dbReference>
<dbReference type="RefSeq" id="WP_011758330.1">
    <property type="nucleotide sequence ID" value="NC_008700.1"/>
</dbReference>
<dbReference type="SMR" id="A1S213"/>
<dbReference type="STRING" id="326297.Sama_0208"/>
<dbReference type="KEGG" id="saz:Sama_0208"/>
<dbReference type="eggNOG" id="COG0048">
    <property type="taxonomic scope" value="Bacteria"/>
</dbReference>
<dbReference type="HOGENOM" id="CLU_104295_1_2_6"/>
<dbReference type="OrthoDB" id="9802366at2"/>
<dbReference type="Proteomes" id="UP000009175">
    <property type="component" value="Chromosome"/>
</dbReference>
<dbReference type="GO" id="GO:0015935">
    <property type="term" value="C:small ribosomal subunit"/>
    <property type="evidence" value="ECO:0007669"/>
    <property type="project" value="InterPro"/>
</dbReference>
<dbReference type="GO" id="GO:0019843">
    <property type="term" value="F:rRNA binding"/>
    <property type="evidence" value="ECO:0007669"/>
    <property type="project" value="UniProtKB-UniRule"/>
</dbReference>
<dbReference type="GO" id="GO:0003735">
    <property type="term" value="F:structural constituent of ribosome"/>
    <property type="evidence" value="ECO:0007669"/>
    <property type="project" value="InterPro"/>
</dbReference>
<dbReference type="GO" id="GO:0000049">
    <property type="term" value="F:tRNA binding"/>
    <property type="evidence" value="ECO:0007669"/>
    <property type="project" value="UniProtKB-UniRule"/>
</dbReference>
<dbReference type="GO" id="GO:0006412">
    <property type="term" value="P:translation"/>
    <property type="evidence" value="ECO:0007669"/>
    <property type="project" value="UniProtKB-UniRule"/>
</dbReference>
<dbReference type="CDD" id="cd03368">
    <property type="entry name" value="Ribosomal_S12"/>
    <property type="match status" value="1"/>
</dbReference>
<dbReference type="FunFam" id="2.40.50.140:FF:000001">
    <property type="entry name" value="30S ribosomal protein S12"/>
    <property type="match status" value="1"/>
</dbReference>
<dbReference type="Gene3D" id="2.40.50.140">
    <property type="entry name" value="Nucleic acid-binding proteins"/>
    <property type="match status" value="1"/>
</dbReference>
<dbReference type="HAMAP" id="MF_00403_B">
    <property type="entry name" value="Ribosomal_uS12_B"/>
    <property type="match status" value="1"/>
</dbReference>
<dbReference type="InterPro" id="IPR012340">
    <property type="entry name" value="NA-bd_OB-fold"/>
</dbReference>
<dbReference type="InterPro" id="IPR006032">
    <property type="entry name" value="Ribosomal_uS12"/>
</dbReference>
<dbReference type="InterPro" id="IPR005679">
    <property type="entry name" value="Ribosomal_uS12_bac"/>
</dbReference>
<dbReference type="NCBIfam" id="TIGR00981">
    <property type="entry name" value="rpsL_bact"/>
    <property type="match status" value="1"/>
</dbReference>
<dbReference type="PANTHER" id="PTHR11652">
    <property type="entry name" value="30S RIBOSOMAL PROTEIN S12 FAMILY MEMBER"/>
    <property type="match status" value="1"/>
</dbReference>
<dbReference type="Pfam" id="PF00164">
    <property type="entry name" value="Ribosom_S12_S23"/>
    <property type="match status" value="1"/>
</dbReference>
<dbReference type="PIRSF" id="PIRSF002133">
    <property type="entry name" value="Ribosomal_S12/S23"/>
    <property type="match status" value="1"/>
</dbReference>
<dbReference type="PRINTS" id="PR01034">
    <property type="entry name" value="RIBOSOMALS12"/>
</dbReference>
<dbReference type="SUPFAM" id="SSF50249">
    <property type="entry name" value="Nucleic acid-binding proteins"/>
    <property type="match status" value="1"/>
</dbReference>
<dbReference type="PROSITE" id="PS00055">
    <property type="entry name" value="RIBOSOMAL_S12"/>
    <property type="match status" value="1"/>
</dbReference>
<protein>
    <recommendedName>
        <fullName evidence="2">Small ribosomal subunit protein uS12</fullName>
    </recommendedName>
    <alternativeName>
        <fullName evidence="3">30S ribosomal protein S12</fullName>
    </alternativeName>
</protein>
<sequence>MATVNQLVRKPRAPKVDKTNVPALEACPQKRGVCTRVYTTAPKKPNSALRKVARVRLTNGFEVTSYIGGEGHNLQEHSVILIRGGRVKDLPGVRYHTIRGALDCAGVNARRQARSKYGAKRPKS</sequence>
<organism>
    <name type="scientific">Shewanella amazonensis (strain ATCC BAA-1098 / SB2B)</name>
    <dbReference type="NCBI Taxonomy" id="326297"/>
    <lineage>
        <taxon>Bacteria</taxon>
        <taxon>Pseudomonadati</taxon>
        <taxon>Pseudomonadota</taxon>
        <taxon>Gammaproteobacteria</taxon>
        <taxon>Alteromonadales</taxon>
        <taxon>Shewanellaceae</taxon>
        <taxon>Shewanella</taxon>
    </lineage>
</organism>
<proteinExistence type="inferred from homology"/>